<gene>
    <name evidence="1" type="primary">ureF</name>
    <name type="ordered locus">Avi_3469</name>
</gene>
<sequence length="230" mass="23842">MTIALDTLGLIRLMTWLSPAFPVGGFAYSGGLEKAVEDGLIDGGGTATGRQEALLAWLTSLLDHGTIWNDAVLLAEAWRVWNVPQSLTEVSDLALALAGSRERYQETTALGAAFREAARAWADPLSALSPNPVAYPVAVGAVGASQGIGCEAVLAAYLHAALSQQVSAGIRLSLIGQTGGLAILSRLEAPVARLAARAVQTGLDDLGSATIAADIVSARHEGQSVRLFRS</sequence>
<organism>
    <name type="scientific">Allorhizobium ampelinum (strain ATCC BAA-846 / DSM 112012 / S4)</name>
    <name type="common">Agrobacterium vitis (strain S4)</name>
    <dbReference type="NCBI Taxonomy" id="311402"/>
    <lineage>
        <taxon>Bacteria</taxon>
        <taxon>Pseudomonadati</taxon>
        <taxon>Pseudomonadota</taxon>
        <taxon>Alphaproteobacteria</taxon>
        <taxon>Hyphomicrobiales</taxon>
        <taxon>Rhizobiaceae</taxon>
        <taxon>Rhizobium/Agrobacterium group</taxon>
        <taxon>Allorhizobium</taxon>
        <taxon>Allorhizobium ampelinum</taxon>
    </lineage>
</organism>
<dbReference type="EMBL" id="CP000633">
    <property type="protein sequence ID" value="ACM37486.1"/>
    <property type="molecule type" value="Genomic_DNA"/>
</dbReference>
<dbReference type="RefSeq" id="WP_015916899.1">
    <property type="nucleotide sequence ID" value="NC_011989.1"/>
</dbReference>
<dbReference type="SMR" id="B9JR75"/>
<dbReference type="STRING" id="311402.Avi_3469"/>
<dbReference type="KEGG" id="avi:Avi_3469"/>
<dbReference type="eggNOG" id="COG0830">
    <property type="taxonomic scope" value="Bacteria"/>
</dbReference>
<dbReference type="HOGENOM" id="CLU_049215_2_0_5"/>
<dbReference type="Proteomes" id="UP000001596">
    <property type="component" value="Chromosome 1"/>
</dbReference>
<dbReference type="GO" id="GO:0005737">
    <property type="term" value="C:cytoplasm"/>
    <property type="evidence" value="ECO:0007669"/>
    <property type="project" value="UniProtKB-SubCell"/>
</dbReference>
<dbReference type="GO" id="GO:0016151">
    <property type="term" value="F:nickel cation binding"/>
    <property type="evidence" value="ECO:0007669"/>
    <property type="project" value="UniProtKB-UniRule"/>
</dbReference>
<dbReference type="Gene3D" id="1.10.4190.10">
    <property type="entry name" value="Urease accessory protein UreF"/>
    <property type="match status" value="1"/>
</dbReference>
<dbReference type="HAMAP" id="MF_01385">
    <property type="entry name" value="UreF"/>
    <property type="match status" value="1"/>
</dbReference>
<dbReference type="InterPro" id="IPR002639">
    <property type="entry name" value="UreF"/>
</dbReference>
<dbReference type="InterPro" id="IPR038277">
    <property type="entry name" value="UreF_sf"/>
</dbReference>
<dbReference type="PANTHER" id="PTHR33620">
    <property type="entry name" value="UREASE ACCESSORY PROTEIN F"/>
    <property type="match status" value="1"/>
</dbReference>
<dbReference type="PANTHER" id="PTHR33620:SF1">
    <property type="entry name" value="UREASE ACCESSORY PROTEIN F"/>
    <property type="match status" value="1"/>
</dbReference>
<dbReference type="Pfam" id="PF01730">
    <property type="entry name" value="UreF"/>
    <property type="match status" value="1"/>
</dbReference>
<dbReference type="PIRSF" id="PIRSF009467">
    <property type="entry name" value="Ureas_acces_UreF"/>
    <property type="match status" value="1"/>
</dbReference>
<protein>
    <recommendedName>
        <fullName evidence="1">Urease accessory protein UreF</fullName>
    </recommendedName>
</protein>
<keyword id="KW-0143">Chaperone</keyword>
<keyword id="KW-0963">Cytoplasm</keyword>
<keyword id="KW-0996">Nickel insertion</keyword>
<keyword id="KW-1185">Reference proteome</keyword>
<comment type="function">
    <text evidence="1">Required for maturation of urease via the functional incorporation of the urease nickel metallocenter.</text>
</comment>
<comment type="subunit">
    <text evidence="1">UreD, UreF and UreG form a complex that acts as a GTP-hydrolysis-dependent molecular chaperone, activating the urease apoprotein by helping to assemble the nickel containing metallocenter of UreC. The UreE protein probably delivers the nickel.</text>
</comment>
<comment type="subcellular location">
    <subcellularLocation>
        <location evidence="1">Cytoplasm</location>
    </subcellularLocation>
</comment>
<comment type="similarity">
    <text evidence="1">Belongs to the UreF family.</text>
</comment>
<evidence type="ECO:0000255" key="1">
    <source>
        <dbReference type="HAMAP-Rule" id="MF_01385"/>
    </source>
</evidence>
<feature type="chain" id="PRO_1000184255" description="Urease accessory protein UreF">
    <location>
        <begin position="1"/>
        <end position="230"/>
    </location>
</feature>
<accession>B9JR75</accession>
<reference key="1">
    <citation type="journal article" date="2009" name="J. Bacteriol.">
        <title>Genome sequences of three Agrobacterium biovars help elucidate the evolution of multichromosome genomes in bacteria.</title>
        <authorList>
            <person name="Slater S.C."/>
            <person name="Goldman B.S."/>
            <person name="Goodner B."/>
            <person name="Setubal J.C."/>
            <person name="Farrand S.K."/>
            <person name="Nester E.W."/>
            <person name="Burr T.J."/>
            <person name="Banta L."/>
            <person name="Dickerman A.W."/>
            <person name="Paulsen I."/>
            <person name="Otten L."/>
            <person name="Suen G."/>
            <person name="Welch R."/>
            <person name="Almeida N.F."/>
            <person name="Arnold F."/>
            <person name="Burton O.T."/>
            <person name="Du Z."/>
            <person name="Ewing A."/>
            <person name="Godsy E."/>
            <person name="Heisel S."/>
            <person name="Houmiel K.L."/>
            <person name="Jhaveri J."/>
            <person name="Lu J."/>
            <person name="Miller N.M."/>
            <person name="Norton S."/>
            <person name="Chen Q."/>
            <person name="Phoolcharoen W."/>
            <person name="Ohlin V."/>
            <person name="Ondrusek D."/>
            <person name="Pride N."/>
            <person name="Stricklin S.L."/>
            <person name="Sun J."/>
            <person name="Wheeler C."/>
            <person name="Wilson L."/>
            <person name="Zhu H."/>
            <person name="Wood D.W."/>
        </authorList>
    </citation>
    <scope>NUCLEOTIDE SEQUENCE [LARGE SCALE GENOMIC DNA]</scope>
    <source>
        <strain>ATCC BAA-846 / DSM 112012 / S4</strain>
    </source>
</reference>
<proteinExistence type="inferred from homology"/>
<name>UREF_ALLAM</name>